<proteinExistence type="evidence at protein level"/>
<evidence type="ECO:0000250" key="1">
    <source>
        <dbReference type="UniProtKB" id="O70534"/>
    </source>
</evidence>
<evidence type="ECO:0000255" key="2"/>
<evidence type="ECO:0000255" key="3">
    <source>
        <dbReference type="PROSITE-ProRule" id="PRU00076"/>
    </source>
</evidence>
<evidence type="ECO:0000269" key="4">
    <source>
    </source>
</evidence>
<evidence type="ECO:0000269" key="5">
    <source>
    </source>
</evidence>
<evidence type="ECO:0000269" key="6">
    <source>
    </source>
</evidence>
<evidence type="ECO:0000269" key="7">
    <source>
    </source>
</evidence>
<evidence type="ECO:0000269" key="8">
    <source>
    </source>
</evidence>
<evidence type="ECO:0000269" key="9">
    <source>
    </source>
</evidence>
<evidence type="ECO:0000269" key="10">
    <source>
    </source>
</evidence>
<evidence type="ECO:0000269" key="11">
    <source>
    </source>
</evidence>
<evidence type="ECO:0000303" key="12">
    <source>
    </source>
</evidence>
<evidence type="ECO:0000305" key="13"/>
<gene>
    <name type="primary">DLK1</name>
    <name type="synonym">DLK</name>
</gene>
<dbReference type="EMBL" id="Z12172">
    <property type="protein sequence ID" value="CAA78163.1"/>
    <property type="molecule type" value="mRNA"/>
</dbReference>
<dbReference type="EMBL" id="U15979">
    <property type="protein sequence ID" value="AAA75364.1"/>
    <property type="molecule type" value="mRNA"/>
</dbReference>
<dbReference type="EMBL" id="U15981">
    <property type="protein sequence ID" value="AAA75365.1"/>
    <property type="molecule type" value="mRNA"/>
</dbReference>
<dbReference type="EMBL" id="X17544">
    <property type="protein sequence ID" value="CAA35582.1"/>
    <property type="status" value="ALT_FRAME"/>
    <property type="molecule type" value="mRNA"/>
</dbReference>
<dbReference type="EMBL" id="AL132711">
    <property type="status" value="NOT_ANNOTATED_CDS"/>
    <property type="molecule type" value="Genomic_DNA"/>
</dbReference>
<dbReference type="EMBL" id="BC013197">
    <property type="protein sequence ID" value="AAH13197.1"/>
    <property type="molecule type" value="mRNA"/>
</dbReference>
<dbReference type="CCDS" id="CCDS81852.1">
    <molecule id="P80370-2"/>
</dbReference>
<dbReference type="CCDS" id="CCDS9963.1">
    <molecule id="P80370-1"/>
</dbReference>
<dbReference type="PIR" id="S53716">
    <property type="entry name" value="S53716"/>
</dbReference>
<dbReference type="PIR" id="S71548">
    <property type="entry name" value="S71548"/>
</dbReference>
<dbReference type="RefSeq" id="NP_001304101.2">
    <molecule id="P80370-2"/>
    <property type="nucleotide sequence ID" value="NM_001317172.2"/>
</dbReference>
<dbReference type="RefSeq" id="NP_003827.3">
    <molecule id="P80370-1"/>
    <property type="nucleotide sequence ID" value="NM_003836.6"/>
</dbReference>
<dbReference type="SMR" id="P80370"/>
<dbReference type="BioGRID" id="114316">
    <property type="interactions" value="103"/>
</dbReference>
<dbReference type="FunCoup" id="P80370">
    <property type="interactions" value="99"/>
</dbReference>
<dbReference type="IntAct" id="P80370">
    <property type="interactions" value="74"/>
</dbReference>
<dbReference type="STRING" id="9606.ENSP00000340292"/>
<dbReference type="BindingDB" id="P80370"/>
<dbReference type="ChEMBL" id="CHEMBL5671"/>
<dbReference type="DrugCentral" id="P80370"/>
<dbReference type="GlyConnect" id="745">
    <property type="glycosylation" value="1 O-Linked glycan (1 site)"/>
</dbReference>
<dbReference type="GlyCosmos" id="P80370">
    <property type="glycosylation" value="12 sites, 2 glycans"/>
</dbReference>
<dbReference type="GlyGen" id="P80370">
    <property type="glycosylation" value="13 sites, 3 O-linked glycans (4 sites)"/>
</dbReference>
<dbReference type="iPTMnet" id="P80370"/>
<dbReference type="PhosphoSitePlus" id="P80370"/>
<dbReference type="SwissPalm" id="P80370"/>
<dbReference type="BioMuta" id="DLK1"/>
<dbReference type="DMDM" id="296439371"/>
<dbReference type="jPOST" id="P80370"/>
<dbReference type="MassIVE" id="P80370"/>
<dbReference type="PaxDb" id="9606-ENSP00000340292"/>
<dbReference type="PeptideAtlas" id="P80370"/>
<dbReference type="ProteomicsDB" id="57681">
    <molecule id="P80370-1"/>
</dbReference>
<dbReference type="ProteomicsDB" id="57682">
    <molecule id="P80370-2"/>
</dbReference>
<dbReference type="ABCD" id="P80370">
    <property type="antibodies" value="9 sequenced antibodies"/>
</dbReference>
<dbReference type="Antibodypedia" id="27564">
    <property type="antibodies" value="615 antibodies from 40 providers"/>
</dbReference>
<dbReference type="DNASU" id="8788"/>
<dbReference type="Ensembl" id="ENST00000331224.10">
    <molecule id="P80370-2"/>
    <property type="protein sequence ID" value="ENSP00000331081.6"/>
    <property type="gene ID" value="ENSG00000185559.16"/>
</dbReference>
<dbReference type="Ensembl" id="ENST00000341267.9">
    <molecule id="P80370-1"/>
    <property type="protein sequence ID" value="ENSP00000340292.4"/>
    <property type="gene ID" value="ENSG00000185559.16"/>
</dbReference>
<dbReference type="GeneID" id="8788"/>
<dbReference type="KEGG" id="hsa:8788"/>
<dbReference type="MANE-Select" id="ENST00000341267.9">
    <property type="protein sequence ID" value="ENSP00000340292.4"/>
    <property type="RefSeq nucleotide sequence ID" value="NM_003836.7"/>
    <property type="RefSeq protein sequence ID" value="NP_003827.4"/>
</dbReference>
<dbReference type="UCSC" id="uc001yhs.5">
    <molecule id="P80370-1"/>
    <property type="organism name" value="human"/>
</dbReference>
<dbReference type="AGR" id="HGNC:2907"/>
<dbReference type="CTD" id="8788"/>
<dbReference type="DisGeNET" id="8788"/>
<dbReference type="GeneCards" id="DLK1"/>
<dbReference type="HGNC" id="HGNC:2907">
    <property type="gene designation" value="DLK1"/>
</dbReference>
<dbReference type="HPA" id="ENSG00000185559">
    <property type="expression patterns" value="Group enriched (adrenal gland, pituitary gland, placenta)"/>
</dbReference>
<dbReference type="MalaCards" id="DLK1"/>
<dbReference type="MIM" id="176290">
    <property type="type" value="gene"/>
</dbReference>
<dbReference type="neXtProt" id="NX_P80370"/>
<dbReference type="OpenTargets" id="ENSG00000185559"/>
<dbReference type="Orphanet" id="650077">
    <property type="disease" value="Genetic central precocious puberty in female"/>
</dbReference>
<dbReference type="Orphanet" id="650097">
    <property type="disease" value="Genetic central precocious puberty in male"/>
</dbReference>
<dbReference type="Orphanet" id="254534">
    <property type="disease" value="Kagami-Ogata syndrome due to maternal 14q32.2 hypermethylation"/>
</dbReference>
<dbReference type="Orphanet" id="254528">
    <property type="disease" value="Kagami-Ogata syndrome due to maternal 14q32.2 microdeletion"/>
</dbReference>
<dbReference type="Orphanet" id="96334">
    <property type="disease" value="Kagami-Ogata syndrome due to paternal uniparental disomy of chromosome 14"/>
</dbReference>
<dbReference type="Orphanet" id="96184">
    <property type="disease" value="Temple syndrome due to maternal uniparental disomy of chromosome 14"/>
</dbReference>
<dbReference type="Orphanet" id="254531">
    <property type="disease" value="Temple syndrome due to paternal 14q32.2 hypomethylation"/>
</dbReference>
<dbReference type="Orphanet" id="254525">
    <property type="disease" value="Temple syndrome due to paternal 14q32.2 microdeletion"/>
</dbReference>
<dbReference type="PharmGKB" id="PA27363"/>
<dbReference type="VEuPathDB" id="HostDB:ENSG00000185559"/>
<dbReference type="eggNOG" id="KOG1217">
    <property type="taxonomic scope" value="Eukaryota"/>
</dbReference>
<dbReference type="GeneTree" id="ENSGT00940000154225"/>
<dbReference type="HOGENOM" id="CLU_039179_0_1_1"/>
<dbReference type="InParanoid" id="P80370"/>
<dbReference type="OMA" id="MQNYKPP"/>
<dbReference type="OrthoDB" id="6130531at2759"/>
<dbReference type="PAN-GO" id="P80370">
    <property type="GO annotations" value="2 GO annotations based on evolutionary models"/>
</dbReference>
<dbReference type="PhylomeDB" id="P80370"/>
<dbReference type="TreeFam" id="TF351835"/>
<dbReference type="PathwayCommons" id="P80370"/>
<dbReference type="Reactome" id="R-HSA-2122948">
    <property type="pathway name" value="Activated NOTCH1 Transmits Signal to the Nucleus"/>
</dbReference>
<dbReference type="SignaLink" id="P80370"/>
<dbReference type="SIGNOR" id="P80370"/>
<dbReference type="BioGRID-ORCS" id="8788">
    <property type="hits" value="16 hits in 1158 CRISPR screens"/>
</dbReference>
<dbReference type="ChiTaRS" id="DLK1">
    <property type="organism name" value="human"/>
</dbReference>
<dbReference type="GeneWiki" id="DLK1"/>
<dbReference type="GenomeRNAi" id="8788"/>
<dbReference type="Pharos" id="P80370">
    <property type="development level" value="Tchem"/>
</dbReference>
<dbReference type="PRO" id="PR:P80370"/>
<dbReference type="Proteomes" id="UP000005640">
    <property type="component" value="Chromosome 14"/>
</dbReference>
<dbReference type="RNAct" id="P80370">
    <property type="molecule type" value="protein"/>
</dbReference>
<dbReference type="Bgee" id="ENSG00000185559">
    <property type="expression patterns" value="Expressed in right adrenal gland cortex and 141 other cell types or tissues"/>
</dbReference>
<dbReference type="ExpressionAtlas" id="P80370">
    <property type="expression patterns" value="baseline and differential"/>
</dbReference>
<dbReference type="GO" id="GO:0005737">
    <property type="term" value="C:cytoplasm"/>
    <property type="evidence" value="ECO:0007669"/>
    <property type="project" value="UniProtKB-SubCell"/>
</dbReference>
<dbReference type="GO" id="GO:0005615">
    <property type="term" value="C:extracellular space"/>
    <property type="evidence" value="ECO:0000314"/>
    <property type="project" value="HGNC"/>
</dbReference>
<dbReference type="GO" id="GO:0016020">
    <property type="term" value="C:membrane"/>
    <property type="evidence" value="ECO:0000318"/>
    <property type="project" value="GO_Central"/>
</dbReference>
<dbReference type="GO" id="GO:0005509">
    <property type="term" value="F:calcium ion binding"/>
    <property type="evidence" value="ECO:0007669"/>
    <property type="project" value="InterPro"/>
</dbReference>
<dbReference type="GO" id="GO:0030154">
    <property type="term" value="P:cell differentiation"/>
    <property type="evidence" value="ECO:0007669"/>
    <property type="project" value="Ensembl"/>
</dbReference>
<dbReference type="GO" id="GO:0045746">
    <property type="term" value="P:negative regulation of Notch signaling pathway"/>
    <property type="evidence" value="ECO:0000314"/>
    <property type="project" value="HGNC"/>
</dbReference>
<dbReference type="CDD" id="cd00054">
    <property type="entry name" value="EGF_CA"/>
    <property type="match status" value="4"/>
</dbReference>
<dbReference type="FunFam" id="2.10.25.10:FF:000018">
    <property type="entry name" value="Delta-like 1"/>
    <property type="match status" value="1"/>
</dbReference>
<dbReference type="FunFam" id="2.10.25.10:FF:000321">
    <property type="entry name" value="Protein delta homolog 1"/>
    <property type="match status" value="1"/>
</dbReference>
<dbReference type="FunFam" id="2.10.25.10:FF:000486">
    <property type="entry name" value="Protein delta homolog 1"/>
    <property type="match status" value="1"/>
</dbReference>
<dbReference type="FunFam" id="2.10.25.10:FF:000551">
    <property type="entry name" value="Protein delta homolog 1"/>
    <property type="match status" value="1"/>
</dbReference>
<dbReference type="FunFam" id="2.10.25.10:FF:000118">
    <property type="entry name" value="protein delta homolog 2"/>
    <property type="match status" value="1"/>
</dbReference>
<dbReference type="Gene3D" id="2.10.25.10">
    <property type="entry name" value="Laminin"/>
    <property type="match status" value="5"/>
</dbReference>
<dbReference type="InterPro" id="IPR001881">
    <property type="entry name" value="EGF-like_Ca-bd_dom"/>
</dbReference>
<dbReference type="InterPro" id="IPR000742">
    <property type="entry name" value="EGF-like_dom"/>
</dbReference>
<dbReference type="InterPro" id="IPR000152">
    <property type="entry name" value="EGF-type_Asp/Asn_hydroxyl_site"/>
</dbReference>
<dbReference type="InterPro" id="IPR051022">
    <property type="entry name" value="Notch_Cell-Fate_Det"/>
</dbReference>
<dbReference type="PANTHER" id="PTHR24049">
    <property type="entry name" value="CRUMBS FAMILY MEMBER"/>
    <property type="match status" value="1"/>
</dbReference>
<dbReference type="PANTHER" id="PTHR24049:SF42">
    <property type="entry name" value="DELTA LIKE NON-CANONICAL NOTCH LIGAND 1"/>
    <property type="match status" value="1"/>
</dbReference>
<dbReference type="Pfam" id="PF00008">
    <property type="entry name" value="EGF"/>
    <property type="match status" value="4"/>
</dbReference>
<dbReference type="PRINTS" id="PR00010">
    <property type="entry name" value="EGFBLOOD"/>
</dbReference>
<dbReference type="SMART" id="SM00181">
    <property type="entry name" value="EGF"/>
    <property type="match status" value="6"/>
</dbReference>
<dbReference type="SMART" id="SM00179">
    <property type="entry name" value="EGF_CA"/>
    <property type="match status" value="4"/>
</dbReference>
<dbReference type="SUPFAM" id="SSF57196">
    <property type="entry name" value="EGF/Laminin"/>
    <property type="match status" value="4"/>
</dbReference>
<dbReference type="PROSITE" id="PS00010">
    <property type="entry name" value="ASX_HYDROXYL"/>
    <property type="match status" value="1"/>
</dbReference>
<dbReference type="PROSITE" id="PS00022">
    <property type="entry name" value="EGF_1"/>
    <property type="match status" value="5"/>
</dbReference>
<dbReference type="PROSITE" id="PS01186">
    <property type="entry name" value="EGF_2"/>
    <property type="match status" value="5"/>
</dbReference>
<dbReference type="PROSITE" id="PS50026">
    <property type="entry name" value="EGF_3"/>
    <property type="match status" value="5"/>
</dbReference>
<reference key="1">
    <citation type="journal article" date="1993" name="J. Biol. Chem.">
        <title>dlk, a putative mammalian homeotic gene differentially expressed in small cell lung carcinoma and neuroendocrine tumor cell line.</title>
        <authorList>
            <person name="Laborda J."/>
            <person name="Sausville E.A."/>
            <person name="Hoffman T."/>
            <person name="Notario V."/>
        </authorList>
    </citation>
    <scope>NUCLEOTIDE SEQUENCE [MRNA] (ISOFORM LONG)</scope>
    <scope>VARIANTS GLY-101 AND GLY-108</scope>
    <source>
        <tissue>Adrenal gland</tissue>
    </source>
</reference>
<reference key="2">
    <citation type="journal article" date="1995" name="Biochim. Biophys. Acta">
        <title>dlk, pG2 and Pref-1 mRNAs encode similar proteins belonging to the EGF-like superfamily. Identification of polymorphic variants of this RNA.</title>
        <authorList>
            <person name="Lee Y.L."/>
            <person name="Helman L."/>
            <person name="Hoffman T."/>
            <person name="Laborda J."/>
        </authorList>
    </citation>
    <scope>NUCLEOTIDE SEQUENCE [MRNA] (ISOFORMS LONG AND SHORT)</scope>
    <scope>VARIANTS GLY-101 AND GLY-108</scope>
    <source>
        <tissue>Adrenal gland</tissue>
        <tissue>Placenta</tissue>
    </source>
</reference>
<reference key="3">
    <citation type="journal article" date="1990" name="Nucleic Acids Res.">
        <title>The sequence of an adrenal specific human cDNA, pG2.</title>
        <authorList>
            <person name="Helman L.J."/>
            <person name="Sack N."/>
            <person name="Plon S."/>
            <person name="Israel M.A."/>
        </authorList>
    </citation>
    <scope>NUCLEOTIDE SEQUENCE [MRNA] (ISOFORM LONG)</scope>
    <scope>VARIANT GLY-101</scope>
    <source>
        <tissue>Adrenal gland</tissue>
    </source>
</reference>
<reference key="4">
    <citation type="journal article" date="2003" name="Nature">
        <title>The DNA sequence and analysis of human chromosome 14.</title>
        <authorList>
            <person name="Heilig R."/>
            <person name="Eckenberg R."/>
            <person name="Petit J.-L."/>
            <person name="Fonknechten N."/>
            <person name="Da Silva C."/>
            <person name="Cattolico L."/>
            <person name="Levy M."/>
            <person name="Barbe V."/>
            <person name="De Berardinis V."/>
            <person name="Ureta-Vidal A."/>
            <person name="Pelletier E."/>
            <person name="Vico V."/>
            <person name="Anthouard V."/>
            <person name="Rowen L."/>
            <person name="Madan A."/>
            <person name="Qin S."/>
            <person name="Sun H."/>
            <person name="Du H."/>
            <person name="Pepin K."/>
            <person name="Artiguenave F."/>
            <person name="Robert C."/>
            <person name="Cruaud C."/>
            <person name="Bruels T."/>
            <person name="Jaillon O."/>
            <person name="Friedlander L."/>
            <person name="Samson G."/>
            <person name="Brottier P."/>
            <person name="Cure S."/>
            <person name="Segurens B."/>
            <person name="Aniere F."/>
            <person name="Samain S."/>
            <person name="Crespeau H."/>
            <person name="Abbasi N."/>
            <person name="Aiach N."/>
            <person name="Boscus D."/>
            <person name="Dickhoff R."/>
            <person name="Dors M."/>
            <person name="Dubois I."/>
            <person name="Friedman C."/>
            <person name="Gouyvenoux M."/>
            <person name="James R."/>
            <person name="Madan A."/>
            <person name="Mairey-Estrada B."/>
            <person name="Mangenot S."/>
            <person name="Martins N."/>
            <person name="Menard M."/>
            <person name="Oztas S."/>
            <person name="Ratcliffe A."/>
            <person name="Shaffer T."/>
            <person name="Trask B."/>
            <person name="Vacherie B."/>
            <person name="Bellemere C."/>
            <person name="Belser C."/>
            <person name="Besnard-Gonnet M."/>
            <person name="Bartol-Mavel D."/>
            <person name="Boutard M."/>
            <person name="Briez-Silla S."/>
            <person name="Combette S."/>
            <person name="Dufosse-Laurent V."/>
            <person name="Ferron C."/>
            <person name="Lechaplais C."/>
            <person name="Louesse C."/>
            <person name="Muselet D."/>
            <person name="Magdelenat G."/>
            <person name="Pateau E."/>
            <person name="Petit E."/>
            <person name="Sirvain-Trukniewicz P."/>
            <person name="Trybou A."/>
            <person name="Vega-Czarny N."/>
            <person name="Bataille E."/>
            <person name="Bluet E."/>
            <person name="Bordelais I."/>
            <person name="Dubois M."/>
            <person name="Dumont C."/>
            <person name="Guerin T."/>
            <person name="Haffray S."/>
            <person name="Hammadi R."/>
            <person name="Muanga J."/>
            <person name="Pellouin V."/>
            <person name="Robert D."/>
            <person name="Wunderle E."/>
            <person name="Gauguet G."/>
            <person name="Roy A."/>
            <person name="Sainte-Marthe L."/>
            <person name="Verdier J."/>
            <person name="Verdier-Discala C."/>
            <person name="Hillier L.W."/>
            <person name="Fulton L."/>
            <person name="McPherson J."/>
            <person name="Matsuda F."/>
            <person name="Wilson R."/>
            <person name="Scarpelli C."/>
            <person name="Gyapay G."/>
            <person name="Wincker P."/>
            <person name="Saurin W."/>
            <person name="Quetier F."/>
            <person name="Waterston R."/>
            <person name="Hood L."/>
            <person name="Weissenbach J."/>
        </authorList>
    </citation>
    <scope>NUCLEOTIDE SEQUENCE [LARGE SCALE GENOMIC DNA]</scope>
</reference>
<reference key="5">
    <citation type="journal article" date="2004" name="Genome Res.">
        <title>The status, quality, and expansion of the NIH full-length cDNA project: the Mammalian Gene Collection (MGC).</title>
        <authorList>
            <consortium name="The MGC Project Team"/>
        </authorList>
    </citation>
    <scope>NUCLEOTIDE SEQUENCE [LARGE SCALE MRNA] (ISOFORM LONG)</scope>
    <scope>VARIANT GLY-101</scope>
    <source>
        <tissue>Adrenal gland</tissue>
    </source>
</reference>
<reference key="6">
    <citation type="journal article" date="1994" name="Eur. J. Biochem.">
        <title>Protein structure of fetal antigen 1 (FA1). A novel circulating human epidermal-growth-factor-like protein expressed in neuroendocrine tumors and its relation to the gene products of dlk and pG2.</title>
        <authorList>
            <person name="Jensen C.H."/>
            <person name="Krogh T.N."/>
            <person name="Hoejrup P."/>
            <person name="Clausen P.P."/>
            <person name="Skjoedt K."/>
            <person name="Larsson L.-I."/>
            <person name="Enghild J.J."/>
            <person name="Teisner B."/>
        </authorList>
    </citation>
    <scope>PROTEIN SEQUENCE OF 24-383</scope>
    <scope>GLYCOSYLATION AT SER-94; ASN-100; THR-143; SER-163; ASN-165; ASN-172; SER-214; THR-222; SER-251 AND SER-260</scope>
    <scope>VARIANT GLY-101</scope>
    <source>
        <tissue>Amniotic fluid</tissue>
    </source>
</reference>
<reference key="7">
    <citation type="journal article" date="1993" name="Hum. Reprod.">
        <title>Studies on the isolation, structural analysis and tissue localization of fetal antigen 1 and its relation to a human adrenal-specific cDNA, pG2.</title>
        <authorList>
            <person name="Jensen C.H."/>
            <person name="Teisner B."/>
            <person name="Hoejrup P."/>
            <person name="Rasmussen H.B."/>
            <person name="Madsen O.D."/>
            <person name="Nielsen B."/>
            <person name="Skjoedt K."/>
        </authorList>
    </citation>
    <scope>PROTEIN SEQUENCE OF 24-60</scope>
    <source>
        <tissue>Amniotic fluid</tissue>
    </source>
</reference>
<reference key="8">
    <citation type="journal article" date="2004" name="Protein Sci.">
        <title>Signal peptide prediction based on analysis of experimentally verified cleavage sites.</title>
        <authorList>
            <person name="Zhang Z."/>
            <person name="Henzel W.J."/>
        </authorList>
    </citation>
    <scope>PROTEIN SEQUENCE OF 24-38</scope>
</reference>
<reference key="9">
    <citation type="journal article" date="2012" name="Mol. Cell. Proteomics">
        <title>Human urinary glycoproteomics; attachment site specific analysis of N- and O-linked glycosylations by CID and ECD.</title>
        <authorList>
            <person name="Halim A."/>
            <person name="Nilsson J."/>
            <person name="Ruetschi U."/>
            <person name="Hesse C."/>
            <person name="Larson G."/>
        </authorList>
    </citation>
    <scope>GLYCOSYLATION AT THR-256</scope>
    <scope>STRUCTURE OF CARBOHYDRATES</scope>
    <scope>IDENTIFICATION BY MASS SPECTROMETRY</scope>
</reference>
<keyword id="KW-0025">Alternative splicing</keyword>
<keyword id="KW-0963">Cytoplasm</keyword>
<keyword id="KW-0903">Direct protein sequencing</keyword>
<keyword id="KW-1015">Disulfide bond</keyword>
<keyword id="KW-0245">EGF-like domain</keyword>
<keyword id="KW-0325">Glycoprotein</keyword>
<keyword id="KW-0472">Membrane</keyword>
<keyword id="KW-1267">Proteomics identification</keyword>
<keyword id="KW-1185">Reference proteome</keyword>
<keyword id="KW-0677">Repeat</keyword>
<keyword id="KW-0732">Signal</keyword>
<keyword id="KW-0812">Transmembrane</keyword>
<keyword id="KW-1133">Transmembrane helix</keyword>
<sequence length="383" mass="41300">MTATEALLRVLLLLLAFGHSTYGAECFPACNPQNGFCEDDNVCRCQPGWQGPLCDQCVTSPGCLHGLCGEPGQCICTDGWDGELCDRDVRACSSAPCANNRTCVSLDDGLYECSCAPGYSGKDCQKKDGPCVINGSPCQHGGTCVDDEGRASHASCLCPPGFSGNFCEIVANSCTPNPCENDGVCTDIGGDFRCRCPAGFIDKTCSRPVTNCASSPCQNGGTCLQHTQVSYECLCKPEFTGLTCVKKRALSPQQVTRLPSGYGLAYRLTPGVHELPVQQPEHRILKVSMKELNKKTPLLTEGQAICFTILGVLTSLVVLGTVGIVFLNKCETWVSNLRYNHMLRKKKNLLLQYNSGEDLAVNIIFPEKIDMTTFSKEAGDEEI</sequence>
<comment type="function">
    <text>May have a role in neuroendocrine differentiation.</text>
</comment>
<comment type="subunit">
    <text evidence="1">Monomer. Interacts with SH3RF2 (By similarity).</text>
</comment>
<comment type="interaction">
    <interactant intactId="EBI-21555397">
        <id>P80370</id>
    </interactant>
    <interactant intactId="EBI-25860013">
        <id>P28799-2</id>
        <label>GRN</label>
    </interactant>
    <organismsDiffer>false</organismsDiffer>
    <experiments>3</experiments>
</comment>
<comment type="interaction">
    <interactant intactId="EBI-21555397">
        <id>P80370</id>
    </interactant>
    <interactant intactId="EBI-5235340">
        <id>Q7Z699</id>
        <label>SPRED1</label>
    </interactant>
    <organismsDiffer>false</organismsDiffer>
    <experiments>3</experiments>
</comment>
<comment type="subcellular location">
    <subcellularLocation>
        <location>Membrane</location>
        <topology>Single-pass type I membrane protein</topology>
    </subcellularLocation>
    <subcellularLocation>
        <location evidence="1">Cytoplasm</location>
    </subcellularLocation>
</comment>
<comment type="alternative products">
    <event type="alternative splicing"/>
    <isoform>
        <id>P80370-1</id>
        <name>Long</name>
        <sequence type="displayed"/>
    </isoform>
    <isoform>
        <id>P80370-2</id>
        <name>Short</name>
        <sequence type="described" ref="VSP_001377"/>
    </isoform>
    <text>Additional isoforms seem to exist.</text>
</comment>
<comment type="tissue specificity">
    <text>Found within the stromal cells in close contact to the vascular structure of placental villi, yolk sac, fetal liver, adrenal cortex and pancreas and in the beta cells of the islets of Langerhans in the adult pancreas. Found also in some forms of neuroendocrine lung tumor tissue.</text>
</comment>
<comment type="PTM">
    <text evidence="6 9">N- and O-glycosylated. O-glycosylated with core 1 or possibly core 8 glycans.</text>
</comment>
<comment type="sequence caution" evidence="13">
    <conflict type="frameshift">
        <sequence resource="EMBL-CDS" id="CAA35582"/>
    </conflict>
</comment>
<name>DLK1_HUMAN</name>
<protein>
    <recommendedName>
        <fullName>Protein delta homolog 1</fullName>
        <shortName>DLK-1</shortName>
    </recommendedName>
    <alternativeName>
        <fullName>pG2</fullName>
    </alternativeName>
    <component>
        <recommendedName>
            <fullName>Fetal antigen 1</fullName>
            <shortName>FA1</shortName>
        </recommendedName>
    </component>
</protein>
<accession>P80370</accession>
<accession>P15803</accession>
<accession>Q96DW5</accession>
<organism>
    <name type="scientific">Homo sapiens</name>
    <name type="common">Human</name>
    <dbReference type="NCBI Taxonomy" id="9606"/>
    <lineage>
        <taxon>Eukaryota</taxon>
        <taxon>Metazoa</taxon>
        <taxon>Chordata</taxon>
        <taxon>Craniata</taxon>
        <taxon>Vertebrata</taxon>
        <taxon>Euteleostomi</taxon>
        <taxon>Mammalia</taxon>
        <taxon>Eutheria</taxon>
        <taxon>Euarchontoglires</taxon>
        <taxon>Primates</taxon>
        <taxon>Haplorrhini</taxon>
        <taxon>Catarrhini</taxon>
        <taxon>Hominidae</taxon>
        <taxon>Homo</taxon>
    </lineage>
</organism>
<feature type="signal peptide" evidence="4 9 11">
    <location>
        <begin position="1"/>
        <end position="23"/>
    </location>
</feature>
<feature type="chain" id="PRO_0000007518" description="Protein delta homolog 1">
    <location>
        <begin position="24"/>
        <end position="383"/>
    </location>
</feature>
<feature type="chain" id="PRO_0000007519" description="Fetal antigen 1">
    <location>
        <begin position="24"/>
        <end position="303"/>
    </location>
</feature>
<feature type="topological domain" description="Extracellular" evidence="2">
    <location>
        <begin position="24"/>
        <end position="303"/>
    </location>
</feature>
<feature type="transmembrane region" description="Helical" evidence="2">
    <location>
        <begin position="304"/>
        <end position="327"/>
    </location>
</feature>
<feature type="topological domain" description="Cytoplasmic" evidence="2">
    <location>
        <begin position="328"/>
        <end position="383"/>
    </location>
</feature>
<feature type="domain" description="EGF-like 1" evidence="3">
    <location>
        <begin position="24"/>
        <end position="55"/>
    </location>
</feature>
<feature type="domain" description="EGF-like 2" evidence="3">
    <location>
        <begin position="53"/>
        <end position="86"/>
    </location>
</feature>
<feature type="domain" description="EGF-like 3" evidence="3">
    <location>
        <begin position="88"/>
        <end position="125"/>
    </location>
</feature>
<feature type="domain" description="EGF-like 4" evidence="3">
    <location>
        <begin position="127"/>
        <end position="168"/>
    </location>
</feature>
<feature type="domain" description="EGF-like 5" evidence="3">
    <location>
        <begin position="170"/>
        <end position="206"/>
    </location>
</feature>
<feature type="domain" description="EGF-like 6" evidence="3">
    <location>
        <begin position="208"/>
        <end position="245"/>
    </location>
</feature>
<feature type="glycosylation site" description="O-linked (GalNAc...) serine" evidence="9">
    <location>
        <position position="94"/>
    </location>
</feature>
<feature type="glycosylation site" description="N-linked (GlcNAc...) asparagine" evidence="9">
    <location>
        <position position="100"/>
    </location>
</feature>
<feature type="glycosylation site" description="O-linked (GalNAc...) threonine" evidence="9">
    <location>
        <position position="143"/>
    </location>
</feature>
<feature type="glycosylation site" description="O-linked (GalNAc...) serine; partial" evidence="9">
    <location>
        <position position="163"/>
    </location>
</feature>
<feature type="glycosylation site" description="N-linked (GlcNAc...) asparagine; atypical; partial" evidence="9">
    <location>
        <position position="165"/>
    </location>
</feature>
<feature type="glycosylation site" description="N-linked (GlcNAc...) asparagine; atypical; partial" evidence="9">
    <location>
        <position position="172"/>
    </location>
</feature>
<feature type="glycosylation site" description="O-linked (GalNAc...) serine" evidence="9">
    <location>
        <position position="214"/>
    </location>
</feature>
<feature type="glycosylation site" description="O-linked (GalNAc...) threonine; partial" evidence="9">
    <location>
        <position position="222"/>
    </location>
</feature>
<feature type="glycosylation site" description="O-linked (GalNAc...) serine; partial" evidence="9">
    <location>
        <position position="251"/>
    </location>
</feature>
<feature type="glycosylation site" description="O-linked (GalNAc...) threonine" evidence="6">
    <location>
        <position position="256"/>
    </location>
</feature>
<feature type="glycosylation site" description="O-linked (GalNAc...) serine; partial" evidence="9">
    <location>
        <position position="260"/>
    </location>
</feature>
<feature type="disulfide bond" evidence="3">
    <location>
        <begin position="26"/>
        <end position="37"/>
    </location>
</feature>
<feature type="disulfide bond" evidence="3">
    <location>
        <begin position="30"/>
        <end position="43"/>
    </location>
</feature>
<feature type="disulfide bond" evidence="3">
    <location>
        <begin position="45"/>
        <end position="54"/>
    </location>
</feature>
<feature type="disulfide bond" evidence="3">
    <location>
        <begin position="57"/>
        <end position="68"/>
    </location>
</feature>
<feature type="disulfide bond" evidence="3">
    <location>
        <begin position="63"/>
        <end position="74"/>
    </location>
</feature>
<feature type="disulfide bond" evidence="3">
    <location>
        <begin position="76"/>
        <end position="85"/>
    </location>
</feature>
<feature type="disulfide bond" evidence="3">
    <location>
        <begin position="92"/>
        <end position="103"/>
    </location>
</feature>
<feature type="disulfide bond" evidence="3">
    <location>
        <begin position="97"/>
        <end position="113"/>
    </location>
</feature>
<feature type="disulfide bond" evidence="3">
    <location>
        <begin position="115"/>
        <end position="124"/>
    </location>
</feature>
<feature type="disulfide bond" evidence="3">
    <location>
        <begin position="131"/>
        <end position="144"/>
    </location>
</feature>
<feature type="disulfide bond" evidence="3">
    <location>
        <begin position="138"/>
        <end position="156"/>
    </location>
</feature>
<feature type="disulfide bond" evidence="3">
    <location>
        <begin position="158"/>
        <end position="167"/>
    </location>
</feature>
<feature type="disulfide bond" evidence="3">
    <location>
        <begin position="174"/>
        <end position="185"/>
    </location>
</feature>
<feature type="disulfide bond" evidence="3">
    <location>
        <begin position="179"/>
        <end position="194"/>
    </location>
</feature>
<feature type="disulfide bond" evidence="3">
    <location>
        <begin position="196"/>
        <end position="205"/>
    </location>
</feature>
<feature type="disulfide bond" evidence="3">
    <location>
        <begin position="212"/>
        <end position="223"/>
    </location>
</feature>
<feature type="disulfide bond" evidence="3">
    <location>
        <begin position="217"/>
        <end position="233"/>
    </location>
</feature>
<feature type="disulfide bond" evidence="3">
    <location>
        <begin position="235"/>
        <end position="244"/>
    </location>
</feature>
<feature type="splice variant" id="VSP_001377" description="In isoform Short." evidence="12">
    <location>
        <begin position="229"/>
        <end position="301"/>
    </location>
</feature>
<feature type="sequence variant" id="VAR_055715" description="In dbSNP:rs34686110.">
    <original>Q</original>
    <variation>L</variation>
    <location>
        <position position="73"/>
    </location>
</feature>
<feature type="sequence variant" id="VAR_060335" description="In dbSNP:rs6575799." evidence="5 7 8 9 10">
    <original>R</original>
    <variation>G</variation>
    <location>
        <position position="101"/>
    </location>
</feature>
<feature type="sequence variant" id="VAR_055716" description="In dbSNP:rs2273607.">
    <original>V</original>
    <variation>M</variation>
    <location>
        <position position="104"/>
    </location>
</feature>
<feature type="sequence variant" id="VAR_060336" description="In dbSNP:rs1058006." evidence="8 10">
    <original>D</original>
    <variation>G</variation>
    <location>
        <position position="108"/>
    </location>
</feature>
<feature type="sequence variant" id="VAR_055717" description="In dbSNP:rs1058009.">
    <original>S</original>
    <variation>N</variation>
    <location>
        <position position="260"/>
    </location>
</feature>
<feature type="sequence variant" id="VAR_002274">
    <location>
        <position position="347"/>
    </location>
</feature>
<feature type="sequence conflict" description="In Ref. 3; CAA35582." evidence="13" ref="3">
    <location>
        <begin position="45"/>
        <end position="47"/>
    </location>
</feature>
<feature type="sequence conflict" description="In Ref. 1; CAA78163." evidence="13" ref="1">
    <original>QP</original>
    <variation>HV</variation>
    <location>
        <begin position="46"/>
        <end position="47"/>
    </location>
</feature>